<reference key="1">
    <citation type="submission" date="2006-10" db="EMBL/GenBank/DDBJ databases">
        <authorList>
            <person name="Fleischmann R.D."/>
            <person name="Dodson R.J."/>
            <person name="Haft D.H."/>
            <person name="Merkel J.S."/>
            <person name="Nelson W.C."/>
            <person name="Fraser C.M."/>
        </authorList>
    </citation>
    <scope>NUCLEOTIDE SEQUENCE [LARGE SCALE GENOMIC DNA]</scope>
    <source>
        <strain>104</strain>
    </source>
</reference>
<gene>
    <name evidence="1" type="primary">thrS</name>
    <name type="ordered locus">MAV_3490</name>
</gene>
<feature type="chain" id="PRO_1000020438" description="Threonine--tRNA ligase">
    <location>
        <begin position="1"/>
        <end position="684"/>
    </location>
</feature>
<feature type="domain" description="TGS" evidence="2">
    <location>
        <begin position="1"/>
        <end position="66"/>
    </location>
</feature>
<feature type="region of interest" description="Catalytic" evidence="1">
    <location>
        <begin position="261"/>
        <end position="567"/>
    </location>
</feature>
<feature type="binding site" evidence="1">
    <location>
        <position position="366"/>
    </location>
    <ligand>
        <name>Zn(2+)</name>
        <dbReference type="ChEBI" id="CHEBI:29105"/>
    </ligand>
</feature>
<feature type="binding site" evidence="1">
    <location>
        <position position="417"/>
    </location>
    <ligand>
        <name>Zn(2+)</name>
        <dbReference type="ChEBI" id="CHEBI:29105"/>
    </ligand>
</feature>
<feature type="binding site" evidence="1">
    <location>
        <position position="544"/>
    </location>
    <ligand>
        <name>Zn(2+)</name>
        <dbReference type="ChEBI" id="CHEBI:29105"/>
    </ligand>
</feature>
<name>SYT_MYCA1</name>
<comment type="function">
    <text evidence="1">Catalyzes the attachment of threonine to tRNA(Thr) in a two-step reaction: L-threonine is first activated by ATP to form Thr-AMP and then transferred to the acceptor end of tRNA(Thr). Also edits incorrectly charged L-seryl-tRNA(Thr).</text>
</comment>
<comment type="catalytic activity">
    <reaction evidence="1">
        <text>tRNA(Thr) + L-threonine + ATP = L-threonyl-tRNA(Thr) + AMP + diphosphate + H(+)</text>
        <dbReference type="Rhea" id="RHEA:24624"/>
        <dbReference type="Rhea" id="RHEA-COMP:9670"/>
        <dbReference type="Rhea" id="RHEA-COMP:9704"/>
        <dbReference type="ChEBI" id="CHEBI:15378"/>
        <dbReference type="ChEBI" id="CHEBI:30616"/>
        <dbReference type="ChEBI" id="CHEBI:33019"/>
        <dbReference type="ChEBI" id="CHEBI:57926"/>
        <dbReference type="ChEBI" id="CHEBI:78442"/>
        <dbReference type="ChEBI" id="CHEBI:78534"/>
        <dbReference type="ChEBI" id="CHEBI:456215"/>
        <dbReference type="EC" id="6.1.1.3"/>
    </reaction>
</comment>
<comment type="cofactor">
    <cofactor evidence="1">
        <name>Zn(2+)</name>
        <dbReference type="ChEBI" id="CHEBI:29105"/>
    </cofactor>
    <text evidence="1">Binds 1 zinc ion per subunit.</text>
</comment>
<comment type="subunit">
    <text evidence="1">Homodimer.</text>
</comment>
<comment type="subcellular location">
    <subcellularLocation>
        <location evidence="1">Cytoplasm</location>
    </subcellularLocation>
</comment>
<comment type="similarity">
    <text evidence="1">Belongs to the class-II aminoacyl-tRNA synthetase family.</text>
</comment>
<keyword id="KW-0030">Aminoacyl-tRNA synthetase</keyword>
<keyword id="KW-0067">ATP-binding</keyword>
<keyword id="KW-0963">Cytoplasm</keyword>
<keyword id="KW-0436">Ligase</keyword>
<keyword id="KW-0479">Metal-binding</keyword>
<keyword id="KW-0547">Nucleotide-binding</keyword>
<keyword id="KW-0648">Protein biosynthesis</keyword>
<keyword id="KW-0694">RNA-binding</keyword>
<keyword id="KW-0820">tRNA-binding</keyword>
<keyword id="KW-0862">Zinc</keyword>
<proteinExistence type="inferred from homology"/>
<accession>A0QID4</accession>
<dbReference type="EC" id="6.1.1.3" evidence="1"/>
<dbReference type="EMBL" id="CP000479">
    <property type="protein sequence ID" value="ABK64485.1"/>
    <property type="molecule type" value="Genomic_DNA"/>
</dbReference>
<dbReference type="RefSeq" id="WP_009977800.1">
    <property type="nucleotide sequence ID" value="NC_008595.1"/>
</dbReference>
<dbReference type="SMR" id="A0QID4"/>
<dbReference type="GeneID" id="75270886"/>
<dbReference type="KEGG" id="mav:MAV_3490"/>
<dbReference type="HOGENOM" id="CLU_008554_0_1_11"/>
<dbReference type="Proteomes" id="UP000001574">
    <property type="component" value="Chromosome"/>
</dbReference>
<dbReference type="GO" id="GO:0005737">
    <property type="term" value="C:cytoplasm"/>
    <property type="evidence" value="ECO:0007669"/>
    <property type="project" value="UniProtKB-SubCell"/>
</dbReference>
<dbReference type="GO" id="GO:0005524">
    <property type="term" value="F:ATP binding"/>
    <property type="evidence" value="ECO:0007669"/>
    <property type="project" value="UniProtKB-UniRule"/>
</dbReference>
<dbReference type="GO" id="GO:0046872">
    <property type="term" value="F:metal ion binding"/>
    <property type="evidence" value="ECO:0007669"/>
    <property type="project" value="UniProtKB-KW"/>
</dbReference>
<dbReference type="GO" id="GO:0004829">
    <property type="term" value="F:threonine-tRNA ligase activity"/>
    <property type="evidence" value="ECO:0007669"/>
    <property type="project" value="UniProtKB-UniRule"/>
</dbReference>
<dbReference type="GO" id="GO:0000049">
    <property type="term" value="F:tRNA binding"/>
    <property type="evidence" value="ECO:0007669"/>
    <property type="project" value="UniProtKB-KW"/>
</dbReference>
<dbReference type="GO" id="GO:0006435">
    <property type="term" value="P:threonyl-tRNA aminoacylation"/>
    <property type="evidence" value="ECO:0007669"/>
    <property type="project" value="UniProtKB-UniRule"/>
</dbReference>
<dbReference type="CDD" id="cd00860">
    <property type="entry name" value="ThrRS_anticodon"/>
    <property type="match status" value="1"/>
</dbReference>
<dbReference type="CDD" id="cd00771">
    <property type="entry name" value="ThrRS_core"/>
    <property type="match status" value="1"/>
</dbReference>
<dbReference type="FunFam" id="3.30.54.20:FF:000003">
    <property type="entry name" value="Threonine--tRNA ligase"/>
    <property type="match status" value="1"/>
</dbReference>
<dbReference type="FunFam" id="3.30.930.10:FF:000019">
    <property type="entry name" value="Threonine--tRNA ligase"/>
    <property type="match status" value="1"/>
</dbReference>
<dbReference type="FunFam" id="3.40.50.800:FF:000001">
    <property type="entry name" value="Threonine--tRNA ligase"/>
    <property type="match status" value="1"/>
</dbReference>
<dbReference type="FunFam" id="3.30.980.10:FF:000005">
    <property type="entry name" value="Threonyl-tRNA synthetase, mitochondrial"/>
    <property type="match status" value="1"/>
</dbReference>
<dbReference type="Gene3D" id="3.30.54.20">
    <property type="match status" value="1"/>
</dbReference>
<dbReference type="Gene3D" id="3.40.50.800">
    <property type="entry name" value="Anticodon-binding domain"/>
    <property type="match status" value="1"/>
</dbReference>
<dbReference type="Gene3D" id="3.30.930.10">
    <property type="entry name" value="Bira Bifunctional Protein, Domain 2"/>
    <property type="match status" value="1"/>
</dbReference>
<dbReference type="Gene3D" id="3.30.980.10">
    <property type="entry name" value="Threonyl-trna Synthetase, Chain A, domain 2"/>
    <property type="match status" value="1"/>
</dbReference>
<dbReference type="HAMAP" id="MF_00184">
    <property type="entry name" value="Thr_tRNA_synth"/>
    <property type="match status" value="1"/>
</dbReference>
<dbReference type="InterPro" id="IPR002314">
    <property type="entry name" value="aa-tRNA-synt_IIb"/>
</dbReference>
<dbReference type="InterPro" id="IPR006195">
    <property type="entry name" value="aa-tRNA-synth_II"/>
</dbReference>
<dbReference type="InterPro" id="IPR045864">
    <property type="entry name" value="aa-tRNA-synth_II/BPL/LPL"/>
</dbReference>
<dbReference type="InterPro" id="IPR004154">
    <property type="entry name" value="Anticodon-bd"/>
</dbReference>
<dbReference type="InterPro" id="IPR036621">
    <property type="entry name" value="Anticodon-bd_dom_sf"/>
</dbReference>
<dbReference type="InterPro" id="IPR004095">
    <property type="entry name" value="TGS"/>
</dbReference>
<dbReference type="InterPro" id="IPR002320">
    <property type="entry name" value="Thr-tRNA-ligase_IIa"/>
</dbReference>
<dbReference type="InterPro" id="IPR018163">
    <property type="entry name" value="Thr/Ala-tRNA-synth_IIc_edit"/>
</dbReference>
<dbReference type="InterPro" id="IPR047246">
    <property type="entry name" value="ThrRS_anticodon"/>
</dbReference>
<dbReference type="InterPro" id="IPR033728">
    <property type="entry name" value="ThrRS_core"/>
</dbReference>
<dbReference type="InterPro" id="IPR012947">
    <property type="entry name" value="tRNA_SAD"/>
</dbReference>
<dbReference type="NCBIfam" id="TIGR00418">
    <property type="entry name" value="thrS"/>
    <property type="match status" value="1"/>
</dbReference>
<dbReference type="PANTHER" id="PTHR11451:SF44">
    <property type="entry name" value="THREONINE--TRNA LIGASE, CHLOROPLASTIC_MITOCHONDRIAL 2"/>
    <property type="match status" value="1"/>
</dbReference>
<dbReference type="PANTHER" id="PTHR11451">
    <property type="entry name" value="THREONINE-TRNA LIGASE"/>
    <property type="match status" value="1"/>
</dbReference>
<dbReference type="Pfam" id="PF03129">
    <property type="entry name" value="HGTP_anticodon"/>
    <property type="match status" value="1"/>
</dbReference>
<dbReference type="Pfam" id="PF00587">
    <property type="entry name" value="tRNA-synt_2b"/>
    <property type="match status" value="1"/>
</dbReference>
<dbReference type="Pfam" id="PF07973">
    <property type="entry name" value="tRNA_SAD"/>
    <property type="match status" value="1"/>
</dbReference>
<dbReference type="PRINTS" id="PR01047">
    <property type="entry name" value="TRNASYNTHTHR"/>
</dbReference>
<dbReference type="SMART" id="SM00863">
    <property type="entry name" value="tRNA_SAD"/>
    <property type="match status" value="1"/>
</dbReference>
<dbReference type="SUPFAM" id="SSF52954">
    <property type="entry name" value="Class II aaRS ABD-related"/>
    <property type="match status" value="1"/>
</dbReference>
<dbReference type="SUPFAM" id="SSF55681">
    <property type="entry name" value="Class II aaRS and biotin synthetases"/>
    <property type="match status" value="1"/>
</dbReference>
<dbReference type="SUPFAM" id="SSF55186">
    <property type="entry name" value="ThrRS/AlaRS common domain"/>
    <property type="match status" value="1"/>
</dbReference>
<dbReference type="PROSITE" id="PS50862">
    <property type="entry name" value="AA_TRNA_LIGASE_II"/>
    <property type="match status" value="1"/>
</dbReference>
<dbReference type="PROSITE" id="PS51880">
    <property type="entry name" value="TGS"/>
    <property type="match status" value="1"/>
</dbReference>
<sequence length="684" mass="76327">MTVPATDSWPAPIRVPAGTTAAAAVRDAGLPGRGAPDAVVVVRDASGTLRDLSWVPDTDAEVVPVAANTDEGRSVIRHSAAHVLAQAVQELFPQAKLGIGPPITDGFYYDFDVPEPFTPEDLDKLEKRMRQIVKEGQLFSRRVYESKEQARAELAGEPYKLELVDDKSGDPDIMEVGGDELTAYDNLNPRTRERVWGDLCRGPHIPTTRHIPAFKLTRSSAAYWRGDQNNASLQRIYGTAWESQEALDDHLRLIEEAQRRDHRKLGSELDLFSFPDEIGSGLAVFHPRGGVVRRELEEYSRRKHIEAGYEFVNTPHITKAQLFHTSGHLDWYADGMFPPMHLDAEYDDDGTVRKPGQDYYLKPMNCPMHTLIYRSRGRSYRELPLRLFEFGTVYRYEKSGVVHGLTRARGFTMDDSHIFCTREQLHGELASLLRFVLELLGDYGLTDFYLELSTKDPDKFVGSDEMWEQATTSLADVAAESGLELVPDPGGAAFYGPKISVQARDALGRSWQMSTIQVDFNFPERFELEYTASDGTRQRPVMIHRALFGSIERFFGILTEHYAGAFPAWLAPVQAVGIPVADEHVPYLESVAAQLKSHGVRVEVDASDDRMAKKIVHHTAQKVPFMLLAGDRDVAAGAVSFRFGDRTQINGVPRDSAVDAIVKWIADRENSVPSAELVKVSSGE</sequence>
<protein>
    <recommendedName>
        <fullName evidence="1">Threonine--tRNA ligase</fullName>
        <ecNumber evidence="1">6.1.1.3</ecNumber>
    </recommendedName>
    <alternativeName>
        <fullName evidence="1">Threonyl-tRNA synthetase</fullName>
        <shortName evidence="1">ThrRS</shortName>
    </alternativeName>
</protein>
<evidence type="ECO:0000255" key="1">
    <source>
        <dbReference type="HAMAP-Rule" id="MF_00184"/>
    </source>
</evidence>
<evidence type="ECO:0000255" key="2">
    <source>
        <dbReference type="PROSITE-ProRule" id="PRU01228"/>
    </source>
</evidence>
<organism>
    <name type="scientific">Mycobacterium avium (strain 104)</name>
    <dbReference type="NCBI Taxonomy" id="243243"/>
    <lineage>
        <taxon>Bacteria</taxon>
        <taxon>Bacillati</taxon>
        <taxon>Actinomycetota</taxon>
        <taxon>Actinomycetes</taxon>
        <taxon>Mycobacteriales</taxon>
        <taxon>Mycobacteriaceae</taxon>
        <taxon>Mycobacterium</taxon>
        <taxon>Mycobacterium avium complex (MAC)</taxon>
    </lineage>
</organism>